<keyword id="KW-0131">Cell cycle</keyword>
<keyword id="KW-0132">Cell division</keyword>
<keyword id="KW-0963">Cytoplasm</keyword>
<keyword id="KW-1185">Reference proteome</keyword>
<keyword id="KW-0717">Septation</keyword>
<feature type="chain" id="PRO_0000334011" description="Cell division protein SepF">
    <location>
        <begin position="1"/>
        <end position="142"/>
    </location>
</feature>
<gene>
    <name evidence="1" type="primary">sepF</name>
    <name type="ordered locus">GK1132</name>
</gene>
<protein>
    <recommendedName>
        <fullName evidence="1">Cell division protein SepF</fullName>
    </recommendedName>
</protein>
<organism>
    <name type="scientific">Geobacillus kaustophilus (strain HTA426)</name>
    <dbReference type="NCBI Taxonomy" id="235909"/>
    <lineage>
        <taxon>Bacteria</taxon>
        <taxon>Bacillati</taxon>
        <taxon>Bacillota</taxon>
        <taxon>Bacilli</taxon>
        <taxon>Bacillales</taxon>
        <taxon>Anoxybacillaceae</taxon>
        <taxon>Geobacillus</taxon>
        <taxon>Geobacillus thermoleovorans group</taxon>
    </lineage>
</organism>
<accession>Q5L0W3</accession>
<dbReference type="EMBL" id="BA000043">
    <property type="protein sequence ID" value="BAD75417.1"/>
    <property type="molecule type" value="Genomic_DNA"/>
</dbReference>
<dbReference type="RefSeq" id="WP_011230632.1">
    <property type="nucleotide sequence ID" value="NC_006510.1"/>
</dbReference>
<dbReference type="SMR" id="Q5L0W3"/>
<dbReference type="STRING" id="235909.GK1132"/>
<dbReference type="KEGG" id="gka:GK1132"/>
<dbReference type="eggNOG" id="COG1799">
    <property type="taxonomic scope" value="Bacteria"/>
</dbReference>
<dbReference type="HOGENOM" id="CLU_078499_4_1_9"/>
<dbReference type="Proteomes" id="UP000001172">
    <property type="component" value="Chromosome"/>
</dbReference>
<dbReference type="GO" id="GO:0005737">
    <property type="term" value="C:cytoplasm"/>
    <property type="evidence" value="ECO:0007669"/>
    <property type="project" value="UniProtKB-SubCell"/>
</dbReference>
<dbReference type="GO" id="GO:0000917">
    <property type="term" value="P:division septum assembly"/>
    <property type="evidence" value="ECO:0007669"/>
    <property type="project" value="UniProtKB-KW"/>
</dbReference>
<dbReference type="GO" id="GO:0043093">
    <property type="term" value="P:FtsZ-dependent cytokinesis"/>
    <property type="evidence" value="ECO:0007669"/>
    <property type="project" value="UniProtKB-UniRule"/>
</dbReference>
<dbReference type="Gene3D" id="3.30.110.150">
    <property type="entry name" value="SepF-like protein"/>
    <property type="match status" value="1"/>
</dbReference>
<dbReference type="HAMAP" id="MF_01197">
    <property type="entry name" value="SepF"/>
    <property type="match status" value="1"/>
</dbReference>
<dbReference type="InterPro" id="IPR023052">
    <property type="entry name" value="Cell_div_SepF"/>
</dbReference>
<dbReference type="InterPro" id="IPR007561">
    <property type="entry name" value="Cell_div_SepF/SepF-rel"/>
</dbReference>
<dbReference type="InterPro" id="IPR038594">
    <property type="entry name" value="SepF-like_sf"/>
</dbReference>
<dbReference type="PANTHER" id="PTHR35798">
    <property type="entry name" value="CELL DIVISION PROTEIN SEPF"/>
    <property type="match status" value="1"/>
</dbReference>
<dbReference type="PANTHER" id="PTHR35798:SF1">
    <property type="entry name" value="CELL DIVISION PROTEIN SEPF"/>
    <property type="match status" value="1"/>
</dbReference>
<dbReference type="Pfam" id="PF04472">
    <property type="entry name" value="SepF"/>
    <property type="match status" value="1"/>
</dbReference>
<proteinExistence type="inferred from homology"/>
<evidence type="ECO:0000255" key="1">
    <source>
        <dbReference type="HAMAP-Rule" id="MF_01197"/>
    </source>
</evidence>
<sequence>MGLMKKFRDYFLEEDYEDYEEEYEAPQPEEEALPKTAGKANVVSLQSVQKSAKVVLAEPRVYAEAQEIADHLKSRRAVIVNLQRIQHEQAKRIVDFLSGTVYAIGGDIQQVGTKIFLCTPENVDVSGSISLDGEDDRPMKRW</sequence>
<comment type="function">
    <text evidence="1">Cell division protein that is part of the divisome complex and is recruited early to the Z-ring. Probably stimulates Z-ring formation, perhaps through the cross-linking of FtsZ protofilaments. Its function overlaps with FtsA.</text>
</comment>
<comment type="subunit">
    <text evidence="1">Homodimer. Interacts with FtsZ.</text>
</comment>
<comment type="subcellular location">
    <subcellularLocation>
        <location evidence="1">Cytoplasm</location>
    </subcellularLocation>
    <text evidence="1">Localizes to the division site, in a FtsZ-dependent manner.</text>
</comment>
<comment type="similarity">
    <text evidence="1">Belongs to the SepF family.</text>
</comment>
<name>SEPF_GEOKA</name>
<reference key="1">
    <citation type="journal article" date="2004" name="Nucleic Acids Res.">
        <title>Thermoadaptation trait revealed by the genome sequence of thermophilic Geobacillus kaustophilus.</title>
        <authorList>
            <person name="Takami H."/>
            <person name="Takaki Y."/>
            <person name="Chee G.-J."/>
            <person name="Nishi S."/>
            <person name="Shimamura S."/>
            <person name="Suzuki H."/>
            <person name="Matsui S."/>
            <person name="Uchiyama I."/>
        </authorList>
    </citation>
    <scope>NUCLEOTIDE SEQUENCE [LARGE SCALE GENOMIC DNA]</scope>
    <source>
        <strain>HTA426</strain>
    </source>
</reference>